<protein>
    <recommendedName>
        <fullName evidence="9 10">Mu-conotoxin MrVIA</fullName>
    </recommendedName>
    <alternativeName>
        <fullName evidence="8">Conotoxin Mr6.5</fullName>
    </alternativeName>
</protein>
<accession>P56708</accession>
<accession>F6LPM9</accession>
<name>O16A_CONMR</name>
<dbReference type="EMBL" id="JF322917">
    <property type="protein sequence ID" value="ADZ74146.1"/>
    <property type="molecule type" value="mRNA"/>
</dbReference>
<dbReference type="PIR" id="A58586">
    <property type="entry name" value="A58586"/>
</dbReference>
<dbReference type="SMR" id="P56708"/>
<dbReference type="ConoServer" id="1554">
    <property type="toxin name" value="MrVIA"/>
</dbReference>
<dbReference type="GO" id="GO:0005576">
    <property type="term" value="C:extracellular region"/>
    <property type="evidence" value="ECO:0007669"/>
    <property type="project" value="UniProtKB-SubCell"/>
</dbReference>
<dbReference type="GO" id="GO:0005246">
    <property type="term" value="F:calcium channel regulator activity"/>
    <property type="evidence" value="ECO:0007669"/>
    <property type="project" value="UniProtKB-KW"/>
</dbReference>
<dbReference type="GO" id="GO:0008200">
    <property type="term" value="F:ion channel inhibitor activity"/>
    <property type="evidence" value="ECO:0007669"/>
    <property type="project" value="InterPro"/>
</dbReference>
<dbReference type="GO" id="GO:0017080">
    <property type="term" value="F:sodium channel regulator activity"/>
    <property type="evidence" value="ECO:0007669"/>
    <property type="project" value="UniProtKB-KW"/>
</dbReference>
<dbReference type="GO" id="GO:0090729">
    <property type="term" value="F:toxin activity"/>
    <property type="evidence" value="ECO:0007669"/>
    <property type="project" value="UniProtKB-KW"/>
</dbReference>
<dbReference type="InterPro" id="IPR004214">
    <property type="entry name" value="Conotoxin"/>
</dbReference>
<dbReference type="Pfam" id="PF02950">
    <property type="entry name" value="Conotoxin"/>
    <property type="match status" value="1"/>
</dbReference>
<dbReference type="SUPFAM" id="SSF57059">
    <property type="entry name" value="omega toxin-like"/>
    <property type="match status" value="1"/>
</dbReference>
<evidence type="ECO:0000250" key="1">
    <source>
        <dbReference type="UniProtKB" id="Q26443"/>
    </source>
</evidence>
<evidence type="ECO:0000255" key="2"/>
<evidence type="ECO:0000269" key="3">
    <source>
    </source>
</evidence>
<evidence type="ECO:0000269" key="4">
    <source>
    </source>
</evidence>
<evidence type="ECO:0000269" key="5">
    <source>
    </source>
</evidence>
<evidence type="ECO:0000269" key="6">
    <source>
    </source>
</evidence>
<evidence type="ECO:0000269" key="7">
    <source>
    </source>
</evidence>
<evidence type="ECO:0000303" key="8">
    <source>
    </source>
</evidence>
<evidence type="ECO:0000303" key="9">
    <source>
    </source>
</evidence>
<evidence type="ECO:0000303" key="10">
    <source>
    </source>
</evidence>
<evidence type="ECO:0000305" key="11"/>
<evidence type="ECO:0000305" key="12">
    <source>
    </source>
</evidence>
<evidence type="ECO:0000305" key="13">
    <source>
    </source>
</evidence>
<reference key="1">
    <citation type="journal article" date="2012" name="Toxicon">
        <title>Diversity and evolution of conotoxins in Conus virgo, Conus eburneus, Conus imperialis and Conus marmoreus from the South China Sea.</title>
        <authorList>
            <person name="Liu Z."/>
            <person name="Li H."/>
            <person name="Liu N."/>
            <person name="Wu C."/>
            <person name="Jiang J."/>
            <person name="Yue J."/>
            <person name="Jing Y."/>
            <person name="Dai Q."/>
        </authorList>
    </citation>
    <scope>NUCLEOTIDE SEQUENCE [MRNA]</scope>
    <source>
        <tissue>Venom gland</tissue>
    </source>
</reference>
<reference key="2">
    <citation type="journal article" date="1995" name="Biochemistry">
        <title>New sodium channel-blocking conotoxins also affect calcium currents in Lymnaea neurons.</title>
        <authorList>
            <person name="Fainzilber M."/>
            <person name="van der Schors R."/>
            <person name="Lodder J.C."/>
            <person name="Li K.W."/>
            <person name="Geraerts W.P."/>
            <person name="Kits K.S."/>
        </authorList>
    </citation>
    <scope>PROTEIN SEQUENCE OF 52-82</scope>
    <scope>FUNCTION</scope>
    <scope>MASS SPECTROMETRY</scope>
    <scope>SUBCELLULAR LOCATION</scope>
    <source>
        <tissue>Venom</tissue>
    </source>
</reference>
<reference key="3">
    <citation type="journal article" date="1995" name="J. Biol. Chem.">
        <title>A new family of conotoxins that blocks voltage-gated sodium channels.</title>
        <authorList>
            <person name="McIntosh J.M."/>
            <person name="Hasson A."/>
            <person name="Spira M.E."/>
            <person name="Gray W.R."/>
            <person name="Li W."/>
            <person name="Marsh M."/>
            <person name="Hillyard D.R."/>
            <person name="Olivera B.M."/>
        </authorList>
    </citation>
    <scope>PROTEIN SEQUENCE OF 52-82</scope>
    <scope>SYNTHESIS OF 52-82</scope>
    <scope>MASS SPECTROMETRY</scope>
    <scope>SUBCELLULAR LOCATION</scope>
    <source>
        <tissue>Venom</tissue>
    </source>
</reference>
<reference key="4">
    <citation type="journal article" date="1996" name="J. Neurophysiol.">
        <title>MuO-conotoxin MrVIA inhibits mammalian sodium channels, but not through site I.</title>
        <authorList>
            <person name="Terlau H."/>
            <person name="Stocker M."/>
            <person name="Shon K.-J."/>
            <person name="McIntosh J.M."/>
            <person name="Olivera B.M."/>
        </authorList>
    </citation>
    <scope>FUNCTION</scope>
    <scope>SYNTHESIS OF 52-82</scope>
</reference>
<reference key="5">
    <citation type="journal article" date="2000" name="J. Neurosci.">
        <title>Distinction among neuronal subtypes of voltage-activated sodium channels by mu-conotoxin PIIIA.</title>
        <authorList>
            <person name="Safo P."/>
            <person name="Rosenbaum T."/>
            <person name="Shcherbatko A."/>
            <person name="Choi D.-Y."/>
            <person name="Han E."/>
            <person name="Toledo-Aral J.J."/>
            <person name="Olivera B.M."/>
            <person name="Brehm P."/>
            <person name="Mandel G."/>
        </authorList>
    </citation>
    <scope>FUNCTION</scope>
</reference>
<reference key="6">
    <citation type="journal article" date="2006" name="FEBS Lett.">
        <title>The muO-conotoxin MrVIA inhibits voltage-gated sodium channels by associating with domain-3.</title>
        <authorList>
            <person name="Zorn S."/>
            <person name="Leipold E."/>
            <person name="Hansel A."/>
            <person name="Bulaj G."/>
            <person name="Olivera B.M."/>
            <person name="Terlau H."/>
            <person name="Heinemann S.H."/>
        </authorList>
    </citation>
    <scope>FUNCTION</scope>
    <scope>SYNTHESIS OF 52-82</scope>
</reference>
<sequence length="82" mass="9267">MKLTCMMIVAVLFLTAWTLVMADDSNNGLANHFSKSRDEMEDPEASKLEKRACRKKWEYCIVPIIGFIYCCPGLICGPFVCV</sequence>
<proteinExistence type="evidence at protein level"/>
<organism>
    <name type="scientific">Conus marmoreus</name>
    <name type="common">Marble cone</name>
    <dbReference type="NCBI Taxonomy" id="42752"/>
    <lineage>
        <taxon>Eukaryota</taxon>
        <taxon>Metazoa</taxon>
        <taxon>Spiralia</taxon>
        <taxon>Lophotrochozoa</taxon>
        <taxon>Mollusca</taxon>
        <taxon>Gastropoda</taxon>
        <taxon>Caenogastropoda</taxon>
        <taxon>Neogastropoda</taxon>
        <taxon>Conoidea</taxon>
        <taxon>Conidae</taxon>
        <taxon>Conus</taxon>
    </lineage>
</organism>
<feature type="signal peptide" evidence="2">
    <location>
        <begin position="1"/>
        <end position="22"/>
    </location>
</feature>
<feature type="propeptide" id="PRO_0000425737" evidence="5 6">
    <location>
        <begin position="23"/>
        <end position="49"/>
    </location>
</feature>
<feature type="peptide" id="PRO_0000044875" description="Mu-conotoxin MrVIA" evidence="5 6">
    <location>
        <begin position="52"/>
        <end position="82"/>
    </location>
</feature>
<feature type="disulfide bond" evidence="1">
    <location>
        <begin position="53"/>
        <end position="71"/>
    </location>
</feature>
<feature type="disulfide bond" evidence="1">
    <location>
        <begin position="60"/>
        <end position="76"/>
    </location>
</feature>
<feature type="disulfide bond" evidence="1">
    <location>
        <begin position="70"/>
        <end position="81"/>
    </location>
</feature>
<comment type="function">
    <text evidence="3 4 6 7">MuO-conotoxins are gating-modifier toxins that inhibit sodium current by trapping the domain II voltage sensor in the closed position to prevent opening of the sodium channel. This toxin inhibits rNav1.2/SCN2A (IC(50)=532 nM), rNav1.4/SCN4A (IC(50)=438 nM) and rNav1.7/SCN9A (IC(50)=345 nM) (PubMed:10627583). It blocks Nav channels by interacting mainly with the C-terminal part of the pore loop of domain-3 (PubMed:16458302). It does not bind on site 1 (PubMed:8890263). At small concentration, this toxin also acts as a calcium current agonist, whereas at higher doses it blocks fast-inactivating calcium current (PubMed:7727394).</text>
</comment>
<comment type="subcellular location">
    <subcellularLocation>
        <location evidence="5 6">Secreted</location>
    </subcellularLocation>
</comment>
<comment type="tissue specificity">
    <text evidence="12 13">Expressed by the venom duct.</text>
</comment>
<comment type="domain">
    <text evidence="1">The presence of a 'disulfide through disulfide knot' structurally defines this protein as a knottin.</text>
</comment>
<comment type="domain">
    <text evidence="11">The cysteine framework is VI/VII (C-C-CC-C-C).</text>
</comment>
<comment type="mass spectrometry" mass="3487.8" method="LSI" evidence="5"/>
<comment type="mass spectrometry" mass="3488.1" method="Electrospray" evidence="6"/>
<comment type="similarity">
    <text evidence="11">Belongs to the conotoxin O1 superfamily.</text>
</comment>
<keyword id="KW-0108">Calcium channel impairing toxin</keyword>
<keyword id="KW-0903">Direct protein sequencing</keyword>
<keyword id="KW-1015">Disulfide bond</keyword>
<keyword id="KW-0872">Ion channel impairing toxin</keyword>
<keyword id="KW-0960">Knottin</keyword>
<keyword id="KW-0528">Neurotoxin</keyword>
<keyword id="KW-0964">Secreted</keyword>
<keyword id="KW-0732">Signal</keyword>
<keyword id="KW-0800">Toxin</keyword>
<keyword id="KW-0738">Voltage-gated sodium channel impairing toxin</keyword>